<comment type="function">
    <text evidence="1">Part of the Sec protein translocase complex. Interacts with the SecYEG preprotein conducting channel. Has a central role in coupling the hydrolysis of ATP to the transfer of proteins into and across the cell membrane, serving as an ATP-driven molecular motor driving the stepwise translocation of polypeptide chains across the membrane.</text>
</comment>
<comment type="catalytic activity">
    <reaction evidence="1">
        <text>ATP + H2O + cellular proteinSide 1 = ADP + phosphate + cellular proteinSide 2.</text>
        <dbReference type="EC" id="7.4.2.8"/>
    </reaction>
</comment>
<comment type="subunit">
    <text evidence="1">Monomer and homodimer. Part of the essential Sec protein translocation apparatus which comprises SecA, SecYEG and auxiliary proteins SecDF. Other proteins may also be involved.</text>
</comment>
<comment type="subcellular location">
    <subcellularLocation>
        <location evidence="1">Cell membrane</location>
        <topology evidence="1">Peripheral membrane protein</topology>
        <orientation evidence="1">Cytoplasmic side</orientation>
    </subcellularLocation>
    <subcellularLocation>
        <location evidence="1">Cytoplasm</location>
    </subcellularLocation>
    <text evidence="1">Distribution is 50-50.</text>
</comment>
<comment type="similarity">
    <text evidence="1">Belongs to the SecA family.</text>
</comment>
<proteinExistence type="inferred from homology"/>
<name>SECA_MYCGA</name>
<evidence type="ECO:0000255" key="1">
    <source>
        <dbReference type="HAMAP-Rule" id="MF_01382"/>
    </source>
</evidence>
<keyword id="KW-0067">ATP-binding</keyword>
<keyword id="KW-1003">Cell membrane</keyword>
<keyword id="KW-0963">Cytoplasm</keyword>
<keyword id="KW-0472">Membrane</keyword>
<keyword id="KW-0547">Nucleotide-binding</keyword>
<keyword id="KW-0653">Protein transport</keyword>
<keyword id="KW-1185">Reference proteome</keyword>
<keyword id="KW-1278">Translocase</keyword>
<keyword id="KW-0811">Translocation</keyword>
<keyword id="KW-0813">Transport</keyword>
<feature type="chain" id="PRO_0000320853" description="Protein translocase subunit SecA">
    <location>
        <begin position="1"/>
        <end position="890"/>
    </location>
</feature>
<feature type="binding site" evidence="1">
    <location>
        <position position="85"/>
    </location>
    <ligand>
        <name>ATP</name>
        <dbReference type="ChEBI" id="CHEBI:30616"/>
    </ligand>
</feature>
<feature type="binding site" evidence="1">
    <location>
        <begin position="103"/>
        <end position="107"/>
    </location>
    <ligand>
        <name>ATP</name>
        <dbReference type="ChEBI" id="CHEBI:30616"/>
    </ligand>
</feature>
<feature type="binding site" evidence="1">
    <location>
        <position position="491"/>
    </location>
    <ligand>
        <name>ATP</name>
        <dbReference type="ChEBI" id="CHEBI:30616"/>
    </ligand>
</feature>
<organism>
    <name type="scientific">Mycoplasmoides gallisepticum (strain R(low / passage 15 / clone 2))</name>
    <name type="common">Mycoplasma gallisepticum</name>
    <dbReference type="NCBI Taxonomy" id="710127"/>
    <lineage>
        <taxon>Bacteria</taxon>
        <taxon>Bacillati</taxon>
        <taxon>Mycoplasmatota</taxon>
        <taxon>Mycoplasmoidales</taxon>
        <taxon>Mycoplasmoidaceae</taxon>
        <taxon>Mycoplasmoides</taxon>
    </lineage>
</organism>
<reference key="1">
    <citation type="journal article" date="2003" name="Microbiology">
        <title>The complete genome sequence of the avian pathogen Mycoplasma gallisepticum strain R(low).</title>
        <authorList>
            <person name="Papazisi L."/>
            <person name="Gorton T.S."/>
            <person name="Kutish G."/>
            <person name="Markham P.F."/>
            <person name="Browning G.F."/>
            <person name="Nguyen D.K."/>
            <person name="Swartzell S."/>
            <person name="Madan A."/>
            <person name="Mahairas G."/>
            <person name="Geary S.J."/>
        </authorList>
    </citation>
    <scope>NUCLEOTIDE SEQUENCE [LARGE SCALE GENOMIC DNA]</scope>
    <source>
        <strain>R(low / passage 15 / clone 2)</strain>
    </source>
</reference>
<accession>Q7NC50</accession>
<sequence length="890" mass="101679">MLINWFKLISPKNRILKRATLAAKQVDALKDEMRALSDEQLFNKTEYFINELKNNKTTDDILVEAFAVIREVVYRETGNFAYLVQLIGAYVVHQGDFSEMMTGEGKTLTLVLAAYLNMLEKKGVHIVTVNEYLAERDAEQARRIFARLNLTVGCNKANLAPHLKKEAFDCDLTYTTNSELGFDYLRDNMVRNYRDKKIRGLHFAIVDEGDSILIDEARTPLIISGQPKKDFRMYFDADKFVETLSESDYKIDPESRSPSLTEKGITKAEKHFKINNLFDLENSDLFHKIGNALTARKIFQNGKEYIVRDDKILIVDHFTGRILEGRSYNGGLHQAVQAKERVPIEAENVVVATVTYQSFFRMYKKLAAVSGTALTESEEFLKIYNMVVVPVPTNRPVIRKDHPDFMFGNLKTKWEAVVNEIEKIHKTGQPILVGTGSVEDSETLHQMLLEKNIMHEVLNAKNHAREAHIIAKAGEVGSVTISTNMAGRGTDIKLGKGAKELGGLYVIGTERHESRRIDNQLRGRSGRQGDIGESRFFISFGDPLFKRFAQDRILKAQEKLASDYFDSKFFSRFLTMTQKKVESVNFDMRKNLIDYDHVLANQRELIYKQRDKILIASDLTEVVDRMAQNFVEGFVETFKDQANQTMVNPIELSIAVQKELLQGEEVTASQFYNQTLLAAKQTVLKLVKDAISKKIEVMTVGIANNVFRDIIIQQMDDAWIHHLDQMLKLREGVSLRSLEQTSPLNIYVEESKKLFDLMLNKIAKNVILAVCAIINPTRNVDINVEQEHRRLEALKRLEEIKKLEELQNNNNEPAKVLFKFPDQHGNMIEREVPVDNLIQLVDGQIIQAQVAEEPKQELNQLEKADQLDQTLIEAKLAEQQEQKNNSATDK</sequence>
<dbReference type="EC" id="7.4.2.8" evidence="1"/>
<dbReference type="EMBL" id="AE015450">
    <property type="protein sequence ID" value="AAP56381.1"/>
    <property type="molecule type" value="Genomic_DNA"/>
</dbReference>
<dbReference type="RefSeq" id="WP_011113260.1">
    <property type="nucleotide sequence ID" value="NC_004829.2"/>
</dbReference>
<dbReference type="SMR" id="Q7NC50"/>
<dbReference type="KEGG" id="mga:MGA_0670"/>
<dbReference type="PATRIC" id="fig|233150.7.peg.33"/>
<dbReference type="HOGENOM" id="CLU_005314_3_0_14"/>
<dbReference type="OrthoDB" id="9805579at2"/>
<dbReference type="Proteomes" id="UP000001418">
    <property type="component" value="Chromosome"/>
</dbReference>
<dbReference type="GO" id="GO:0031522">
    <property type="term" value="C:cell envelope Sec protein transport complex"/>
    <property type="evidence" value="ECO:0007669"/>
    <property type="project" value="TreeGrafter"/>
</dbReference>
<dbReference type="GO" id="GO:0005829">
    <property type="term" value="C:cytosol"/>
    <property type="evidence" value="ECO:0007669"/>
    <property type="project" value="TreeGrafter"/>
</dbReference>
<dbReference type="GO" id="GO:0005886">
    <property type="term" value="C:plasma membrane"/>
    <property type="evidence" value="ECO:0007669"/>
    <property type="project" value="UniProtKB-SubCell"/>
</dbReference>
<dbReference type="GO" id="GO:0005524">
    <property type="term" value="F:ATP binding"/>
    <property type="evidence" value="ECO:0007669"/>
    <property type="project" value="UniProtKB-UniRule"/>
</dbReference>
<dbReference type="GO" id="GO:0008564">
    <property type="term" value="F:protein-exporting ATPase activity"/>
    <property type="evidence" value="ECO:0007669"/>
    <property type="project" value="UniProtKB-EC"/>
</dbReference>
<dbReference type="GO" id="GO:0065002">
    <property type="term" value="P:intracellular protein transmembrane transport"/>
    <property type="evidence" value="ECO:0007669"/>
    <property type="project" value="UniProtKB-UniRule"/>
</dbReference>
<dbReference type="GO" id="GO:0017038">
    <property type="term" value="P:protein import"/>
    <property type="evidence" value="ECO:0007669"/>
    <property type="project" value="InterPro"/>
</dbReference>
<dbReference type="GO" id="GO:0006605">
    <property type="term" value="P:protein targeting"/>
    <property type="evidence" value="ECO:0007669"/>
    <property type="project" value="UniProtKB-UniRule"/>
</dbReference>
<dbReference type="GO" id="GO:0043952">
    <property type="term" value="P:protein transport by the Sec complex"/>
    <property type="evidence" value="ECO:0007669"/>
    <property type="project" value="TreeGrafter"/>
</dbReference>
<dbReference type="CDD" id="cd17928">
    <property type="entry name" value="DEXDc_SecA"/>
    <property type="match status" value="1"/>
</dbReference>
<dbReference type="CDD" id="cd18803">
    <property type="entry name" value="SF2_C_secA"/>
    <property type="match status" value="1"/>
</dbReference>
<dbReference type="FunFam" id="3.40.50.300:FF:000429">
    <property type="entry name" value="Preprotein translocase subunit SecA"/>
    <property type="match status" value="1"/>
</dbReference>
<dbReference type="Gene3D" id="1.10.3060.10">
    <property type="entry name" value="Helical scaffold and wing domains of SecA"/>
    <property type="match status" value="1"/>
</dbReference>
<dbReference type="Gene3D" id="3.40.50.300">
    <property type="entry name" value="P-loop containing nucleotide triphosphate hydrolases"/>
    <property type="match status" value="3"/>
</dbReference>
<dbReference type="Gene3D" id="3.90.1440.10">
    <property type="entry name" value="SecA, preprotein cross-linking domain"/>
    <property type="match status" value="1"/>
</dbReference>
<dbReference type="HAMAP" id="MF_01382">
    <property type="entry name" value="SecA"/>
    <property type="match status" value="1"/>
</dbReference>
<dbReference type="InterPro" id="IPR014001">
    <property type="entry name" value="Helicase_ATP-bd"/>
</dbReference>
<dbReference type="InterPro" id="IPR001650">
    <property type="entry name" value="Helicase_C-like"/>
</dbReference>
<dbReference type="InterPro" id="IPR027417">
    <property type="entry name" value="P-loop_NTPase"/>
</dbReference>
<dbReference type="InterPro" id="IPR000185">
    <property type="entry name" value="SecA"/>
</dbReference>
<dbReference type="InterPro" id="IPR020937">
    <property type="entry name" value="SecA_CS"/>
</dbReference>
<dbReference type="InterPro" id="IPR011115">
    <property type="entry name" value="SecA_DEAD"/>
</dbReference>
<dbReference type="InterPro" id="IPR014018">
    <property type="entry name" value="SecA_motor_DEAD"/>
</dbReference>
<dbReference type="InterPro" id="IPR011130">
    <property type="entry name" value="SecA_preprotein_X-link_dom"/>
</dbReference>
<dbReference type="InterPro" id="IPR044722">
    <property type="entry name" value="SecA_SF2_C"/>
</dbReference>
<dbReference type="InterPro" id="IPR011116">
    <property type="entry name" value="SecA_Wing/Scaffold"/>
</dbReference>
<dbReference type="InterPro" id="IPR036266">
    <property type="entry name" value="SecA_Wing/Scaffold_sf"/>
</dbReference>
<dbReference type="InterPro" id="IPR036670">
    <property type="entry name" value="SecA_X-link_sf"/>
</dbReference>
<dbReference type="NCBIfam" id="TIGR00963">
    <property type="entry name" value="secA"/>
    <property type="match status" value="1"/>
</dbReference>
<dbReference type="PANTHER" id="PTHR30612:SF0">
    <property type="entry name" value="CHLOROPLAST PROTEIN-TRANSPORTING ATPASE"/>
    <property type="match status" value="1"/>
</dbReference>
<dbReference type="PANTHER" id="PTHR30612">
    <property type="entry name" value="SECA INNER MEMBRANE COMPONENT OF SEC PROTEIN SECRETION SYSTEM"/>
    <property type="match status" value="1"/>
</dbReference>
<dbReference type="Pfam" id="PF21090">
    <property type="entry name" value="P-loop_SecA"/>
    <property type="match status" value="2"/>
</dbReference>
<dbReference type="Pfam" id="PF07517">
    <property type="entry name" value="SecA_DEAD"/>
    <property type="match status" value="1"/>
</dbReference>
<dbReference type="Pfam" id="PF01043">
    <property type="entry name" value="SecA_PP_bind"/>
    <property type="match status" value="1"/>
</dbReference>
<dbReference type="Pfam" id="PF07516">
    <property type="entry name" value="SecA_SW"/>
    <property type="match status" value="1"/>
</dbReference>
<dbReference type="PRINTS" id="PR00906">
    <property type="entry name" value="SECA"/>
</dbReference>
<dbReference type="SMART" id="SM00957">
    <property type="entry name" value="SecA_DEAD"/>
    <property type="match status" value="1"/>
</dbReference>
<dbReference type="SMART" id="SM00958">
    <property type="entry name" value="SecA_PP_bind"/>
    <property type="match status" value="1"/>
</dbReference>
<dbReference type="SUPFAM" id="SSF81886">
    <property type="entry name" value="Helical scaffold and wing domains of SecA"/>
    <property type="match status" value="1"/>
</dbReference>
<dbReference type="SUPFAM" id="SSF52540">
    <property type="entry name" value="P-loop containing nucleoside triphosphate hydrolases"/>
    <property type="match status" value="2"/>
</dbReference>
<dbReference type="SUPFAM" id="SSF81767">
    <property type="entry name" value="Pre-protein crosslinking domain of SecA"/>
    <property type="match status" value="1"/>
</dbReference>
<dbReference type="PROSITE" id="PS01312">
    <property type="entry name" value="SECA"/>
    <property type="match status" value="1"/>
</dbReference>
<dbReference type="PROSITE" id="PS51196">
    <property type="entry name" value="SECA_MOTOR_DEAD"/>
    <property type="match status" value="1"/>
</dbReference>
<gene>
    <name evidence="1" type="primary">secA</name>
    <name type="ordered locus">MYCGA0310</name>
    <name type="ORF">MGA_0670</name>
</gene>
<protein>
    <recommendedName>
        <fullName evidence="1">Protein translocase subunit SecA</fullName>
        <ecNumber evidence="1">7.4.2.8</ecNumber>
    </recommendedName>
</protein>